<keyword id="KW-0025">Alternative splicing</keyword>
<keyword id="KW-1003">Cell membrane</keyword>
<keyword id="KW-0217">Developmental protein</keyword>
<keyword id="KW-0221">Differentiation</keyword>
<keyword id="KW-1015">Disulfide bond</keyword>
<keyword id="KW-0297">G-protein coupled receptor</keyword>
<keyword id="KW-0325">Glycoprotein</keyword>
<keyword id="KW-0472">Membrane</keyword>
<keyword id="KW-0597">Phosphoprotein</keyword>
<keyword id="KW-0675">Receptor</keyword>
<keyword id="KW-1185">Reference proteome</keyword>
<keyword id="KW-0732">Signal</keyword>
<keyword id="KW-0744">Spermatogenesis</keyword>
<keyword id="KW-0807">Transducer</keyword>
<keyword id="KW-0812">Transmembrane</keyword>
<keyword id="KW-1133">Transmembrane helix</keyword>
<proteinExistence type="evidence at transcript level"/>
<feature type="signal peptide" evidence="4">
    <location>
        <begin position="1"/>
        <end position="19"/>
    </location>
</feature>
<feature type="chain" id="PRO_0000012843" description="Pituitary adenylate cyclase-activating polypeptide type I receptor">
    <location>
        <begin position="20"/>
        <end position="523"/>
    </location>
</feature>
<feature type="topological domain" description="Extracellular" evidence="5">
    <location>
        <begin position="20"/>
        <end position="151"/>
    </location>
</feature>
<feature type="transmembrane region" description="Helical; Name=1" evidence="2">
    <location>
        <begin position="152"/>
        <end position="176"/>
    </location>
</feature>
<feature type="topological domain" description="Cytoplasmic" evidence="5">
    <location>
        <begin position="177"/>
        <end position="186"/>
    </location>
</feature>
<feature type="transmembrane region" description="Helical; Name=2" evidence="2">
    <location>
        <begin position="187"/>
        <end position="207"/>
    </location>
</feature>
<feature type="topological domain" description="Extracellular" evidence="5">
    <location>
        <begin position="208"/>
        <end position="222"/>
    </location>
</feature>
<feature type="transmembrane region" description="Helical; Name=3" evidence="2">
    <location>
        <begin position="223"/>
        <end position="248"/>
    </location>
</feature>
<feature type="topological domain" description="Cytoplasmic" evidence="5">
    <location>
        <begin position="249"/>
        <end position="266"/>
    </location>
</feature>
<feature type="transmembrane region" description="Helical; Name=4" evidence="2">
    <location>
        <begin position="267"/>
        <end position="289"/>
    </location>
</feature>
<feature type="topological domain" description="Extracellular" evidence="5">
    <location>
        <begin position="290"/>
        <end position="301"/>
    </location>
</feature>
<feature type="transmembrane region" description="Helical; Name=5" evidence="2">
    <location>
        <begin position="302"/>
        <end position="328"/>
    </location>
</feature>
<feature type="topological domain" description="Cytoplasmic" evidence="5">
    <location>
        <begin position="329"/>
        <end position="346"/>
    </location>
</feature>
<feature type="transmembrane region" description="Helical; Name=6" evidence="2">
    <location>
        <begin position="347"/>
        <end position="429"/>
    </location>
</feature>
<feature type="topological domain" description="Extracellular" evidence="5">
    <location>
        <begin position="430"/>
        <end position="434"/>
    </location>
</feature>
<feature type="transmembrane region" description="Helical; Name=7" evidence="2">
    <location>
        <begin position="435"/>
        <end position="458"/>
    </location>
</feature>
<feature type="topological domain" description="Cytoplasmic" evidence="5">
    <location>
        <begin position="459"/>
        <end position="523"/>
    </location>
</feature>
<feature type="region of interest" description="Important for ADCYAP1/PACAP ligand binding and specificity" evidence="2">
    <location>
        <begin position="124"/>
        <end position="138"/>
    </location>
</feature>
<feature type="region of interest" description="Important for ligand binding and specificity" evidence="1">
    <location>
        <begin position="124"/>
        <end position="138"/>
    </location>
</feature>
<feature type="modified residue" description="Phosphoserine" evidence="3">
    <location>
        <position position="489"/>
    </location>
</feature>
<feature type="modified residue" description="Phosphoserine" evidence="3">
    <location>
        <position position="502"/>
    </location>
</feature>
<feature type="glycosylation site" description="N-linked (GlcNAc...) asparagine" evidence="4">
    <location>
        <position position="47"/>
    </location>
</feature>
<feature type="glycosylation site" description="N-linked (GlcNAc...) asparagine" evidence="4">
    <location>
        <position position="59"/>
    </location>
</feature>
<feature type="glycosylation site" description="N-linked (GlcNAc...) asparagine" evidence="4">
    <location>
        <position position="116"/>
    </location>
</feature>
<feature type="disulfide bond" evidence="2">
    <location>
        <begin position="33"/>
        <end position="62"/>
    </location>
</feature>
<feature type="disulfide bond" evidence="2">
    <location>
        <begin position="53"/>
        <end position="117"/>
    </location>
</feature>
<feature type="disulfide bond" evidence="2">
    <location>
        <begin position="76"/>
        <end position="133"/>
    </location>
</feature>
<feature type="disulfide bond" evidence="2">
    <location>
        <begin position="225"/>
        <end position="295"/>
    </location>
</feature>
<feature type="splice variant" id="VSP_002005" description="In isoform HOP1 and isoform HOP2." evidence="5">
    <original>L</original>
    <variation>F</variation>
    <location>
        <position position="348"/>
    </location>
</feature>
<feature type="splice variant" id="VSP_002009" description="In isoform PACAP-R." evidence="5">
    <location>
        <begin position="349"/>
        <end position="404"/>
    </location>
</feature>
<feature type="splice variant" id="VSP_002007" description="In isoform HOP2." evidence="5">
    <location>
        <begin position="349"/>
        <end position="377"/>
    </location>
</feature>
<feature type="splice variant" id="VSP_002006" description="In isoform HOP1." evidence="5">
    <location>
        <begin position="349"/>
        <end position="376"/>
    </location>
</feature>
<feature type="splice variant" id="VSP_002008" description="In isoform HIP." evidence="5">
    <location>
        <begin position="377"/>
        <end position="404"/>
    </location>
</feature>
<feature type="sequence conflict" description="In Ref. 1; AAA41792." evidence="5" ref="1">
    <original>F</original>
    <variation>L</variation>
    <location>
        <position position="449"/>
    </location>
</feature>
<feature type="sequence conflict" description="In Ref. 6; AAA02990/CAA80429." evidence="5" ref="6">
    <original>QL</original>
    <variation>HV</variation>
    <location>
        <begin position="510"/>
        <end position="511"/>
    </location>
</feature>
<feature type="sequence conflict" description="In Ref. 6; AAA02990/CAA80429." evidence="5" ref="6">
    <original>SL</original>
    <variation>TV</variation>
    <location>
        <begin position="515"/>
        <end position="516"/>
    </location>
</feature>
<protein>
    <recommendedName>
        <fullName>Pituitary adenylate cyclase-activating polypeptide type I receptor</fullName>
        <shortName>PACAP type I receptor</shortName>
        <shortName>PACAP-R-1</shortName>
        <shortName>PACAP-R1</shortName>
    </recommendedName>
</protein>
<organism>
    <name type="scientific">Rattus norvegicus</name>
    <name type="common">Rat</name>
    <dbReference type="NCBI Taxonomy" id="10116"/>
    <lineage>
        <taxon>Eukaryota</taxon>
        <taxon>Metazoa</taxon>
        <taxon>Chordata</taxon>
        <taxon>Craniata</taxon>
        <taxon>Vertebrata</taxon>
        <taxon>Euteleostomi</taxon>
        <taxon>Mammalia</taxon>
        <taxon>Eutheria</taxon>
        <taxon>Euarchontoglires</taxon>
        <taxon>Glires</taxon>
        <taxon>Rodentia</taxon>
        <taxon>Myomorpha</taxon>
        <taxon>Muroidea</taxon>
        <taxon>Muridae</taxon>
        <taxon>Murinae</taxon>
        <taxon>Rattus</taxon>
    </lineage>
</organism>
<dbReference type="EMBL" id="D16465">
    <property type="protein sequence ID" value="BAA03932.1"/>
    <property type="molecule type" value="mRNA"/>
</dbReference>
<dbReference type="EMBL" id="L16680">
    <property type="protein sequence ID" value="AAA41792.1"/>
    <property type="molecule type" value="mRNA"/>
</dbReference>
<dbReference type="EMBL" id="D14908">
    <property type="protein sequence ID" value="BAA03608.1"/>
    <property type="molecule type" value="mRNA"/>
</dbReference>
<dbReference type="EMBL" id="D14909">
    <property type="protein sequence ID" value="BAA03609.1"/>
    <property type="molecule type" value="mRNA"/>
</dbReference>
<dbReference type="EMBL" id="Z23272">
    <property type="protein sequence ID" value="CAA80810.1"/>
    <property type="molecule type" value="mRNA"/>
</dbReference>
<dbReference type="EMBL" id="Z23273">
    <property type="protein sequence ID" value="CAA80811.1"/>
    <property type="molecule type" value="mRNA"/>
</dbReference>
<dbReference type="EMBL" id="Z23274">
    <property type="protein sequence ID" value="CAA80812.1"/>
    <property type="molecule type" value="mRNA"/>
</dbReference>
<dbReference type="EMBL" id="Z23275">
    <property type="protein sequence ID" value="CAA80813.1"/>
    <property type="molecule type" value="mRNA"/>
</dbReference>
<dbReference type="EMBL" id="Z23279">
    <property type="protein sequence ID" value="CAA80817.1"/>
    <property type="molecule type" value="mRNA"/>
</dbReference>
<dbReference type="EMBL" id="Z23282">
    <property type="protein sequence ID" value="CAA80821.1"/>
    <property type="molecule type" value="mRNA"/>
</dbReference>
<dbReference type="EMBL" id="Z23282">
    <property type="protein sequence ID" value="CAA80820.1"/>
    <property type="molecule type" value="mRNA"/>
</dbReference>
<dbReference type="EMBL" id="L16506">
    <property type="protein sequence ID" value="AAA02990.1"/>
    <property type="molecule type" value="mRNA"/>
</dbReference>
<dbReference type="EMBL" id="Z22735">
    <property type="protein sequence ID" value="CAA80429.1"/>
    <property type="molecule type" value="mRNA"/>
</dbReference>
<dbReference type="PIR" id="JN0616">
    <property type="entry name" value="JN0616"/>
</dbReference>
<dbReference type="PIR" id="S33449">
    <property type="entry name" value="S33449"/>
</dbReference>
<dbReference type="PIR" id="S36114">
    <property type="entry name" value="S36114"/>
</dbReference>
<dbReference type="PIR" id="S39060">
    <property type="entry name" value="S39060"/>
</dbReference>
<dbReference type="PIR" id="S39061">
    <property type="entry name" value="S39061"/>
</dbReference>
<dbReference type="RefSeq" id="NP_001257508.1">
    <molecule id="P32215-1"/>
    <property type="nucleotide sequence ID" value="NM_001270579.1"/>
</dbReference>
<dbReference type="RefSeq" id="NP_001257509.1">
    <molecule id="P32215-4"/>
    <property type="nucleotide sequence ID" value="NM_001270580.1"/>
</dbReference>
<dbReference type="RefSeq" id="NP_001257510.1">
    <molecule id="P32215-5"/>
    <property type="nucleotide sequence ID" value="NM_001270581.1"/>
</dbReference>
<dbReference type="RefSeq" id="NP_001257511.1">
    <molecule id="P32215-5"/>
    <property type="nucleotide sequence ID" value="NM_001270582.1"/>
</dbReference>
<dbReference type="RefSeq" id="NP_001257512.1">
    <molecule id="P32215-3"/>
    <property type="nucleotide sequence ID" value="NM_001270583.1"/>
</dbReference>
<dbReference type="RefSeq" id="NP_598195.1">
    <molecule id="P32215-2"/>
    <property type="nucleotide sequence ID" value="NM_133511.2"/>
</dbReference>
<dbReference type="RefSeq" id="XP_017447918.1">
    <property type="nucleotide sequence ID" value="XM_017592429.1"/>
</dbReference>
<dbReference type="RefSeq" id="XP_017447919.1">
    <property type="nucleotide sequence ID" value="XM_017592430.1"/>
</dbReference>
<dbReference type="RefSeq" id="XP_017447920.1">
    <property type="nucleotide sequence ID" value="XM_017592431.1"/>
</dbReference>
<dbReference type="RefSeq" id="XP_063141538.1">
    <molecule id="P32215-2"/>
    <property type="nucleotide sequence ID" value="XM_063285468.1"/>
</dbReference>
<dbReference type="RefSeq" id="XP_063141539.1">
    <molecule id="P32215-5"/>
    <property type="nucleotide sequence ID" value="XM_063285469.1"/>
</dbReference>
<dbReference type="SMR" id="P32215"/>
<dbReference type="FunCoup" id="P32215">
    <property type="interactions" value="580"/>
</dbReference>
<dbReference type="STRING" id="10116.ENSRNOP00000016175"/>
<dbReference type="ChEMBL" id="CHEMBL1075233"/>
<dbReference type="GuidetoPHARMACOLOGY" id="370"/>
<dbReference type="GlyCosmos" id="P32215">
    <property type="glycosylation" value="3 sites, No reported glycans"/>
</dbReference>
<dbReference type="GlyGen" id="P32215">
    <property type="glycosylation" value="3 sites"/>
</dbReference>
<dbReference type="iPTMnet" id="P32215"/>
<dbReference type="PhosphoSitePlus" id="P32215"/>
<dbReference type="PaxDb" id="10116-ENSRNOP00000016175"/>
<dbReference type="Ensembl" id="ENSRNOT00000016175.6">
    <molecule id="P32215-1"/>
    <property type="protein sequence ID" value="ENSRNOP00000016175.3"/>
    <property type="gene ID" value="ENSRNOG00000012098.7"/>
</dbReference>
<dbReference type="Ensembl" id="ENSRNOT00000035722.5">
    <molecule id="P32215-2"/>
    <property type="protein sequence ID" value="ENSRNOP00000030759.2"/>
    <property type="gene ID" value="ENSRNOG00000012098.7"/>
</dbReference>
<dbReference type="Ensembl" id="ENSRNOT00000043851.4">
    <molecule id="P32215-5"/>
    <property type="protein sequence ID" value="ENSRNOP00000044267.2"/>
    <property type="gene ID" value="ENSRNOG00000012098.7"/>
</dbReference>
<dbReference type="Ensembl" id="ENSRNOT00000046192.5">
    <molecule id="P32215-4"/>
    <property type="protein sequence ID" value="ENSRNOP00000050048.2"/>
    <property type="gene ID" value="ENSRNOG00000012098.7"/>
</dbReference>
<dbReference type="GeneID" id="24167"/>
<dbReference type="KEGG" id="rno:24167"/>
<dbReference type="UCSC" id="RGD:2038">
    <molecule id="P32215-1"/>
    <property type="organism name" value="rat"/>
</dbReference>
<dbReference type="AGR" id="RGD:2038"/>
<dbReference type="CTD" id="117"/>
<dbReference type="RGD" id="2038">
    <property type="gene designation" value="Adcyap1r1"/>
</dbReference>
<dbReference type="eggNOG" id="KOG4564">
    <property type="taxonomic scope" value="Eukaryota"/>
</dbReference>
<dbReference type="GeneTree" id="ENSGT00940000157362"/>
<dbReference type="HOGENOM" id="CLU_002753_4_4_1"/>
<dbReference type="InParanoid" id="P32215"/>
<dbReference type="OMA" id="HLRSCVQ"/>
<dbReference type="OrthoDB" id="5967113at2759"/>
<dbReference type="PhylomeDB" id="P32215"/>
<dbReference type="TreeFam" id="TF315710"/>
<dbReference type="Reactome" id="R-RNO-420092">
    <molecule id="P32215-1"/>
    <property type="pathway name" value="Glucagon-type ligand receptors"/>
</dbReference>
<dbReference type="PRO" id="PR:P32215"/>
<dbReference type="Proteomes" id="UP000002494">
    <property type="component" value="Chromosome 4"/>
</dbReference>
<dbReference type="Bgee" id="ENSRNOG00000012098">
    <property type="expression patterns" value="Expressed in frontal cortex and 15 other cell types or tissues"/>
</dbReference>
<dbReference type="GO" id="GO:0005923">
    <property type="term" value="C:bicellular tight junction"/>
    <property type="evidence" value="ECO:0000314"/>
    <property type="project" value="RGD"/>
</dbReference>
<dbReference type="GO" id="GO:0005901">
    <property type="term" value="C:caveola"/>
    <property type="evidence" value="ECO:0000314"/>
    <property type="project" value="RGD"/>
</dbReference>
<dbReference type="GO" id="GO:0009986">
    <property type="term" value="C:cell surface"/>
    <property type="evidence" value="ECO:0000314"/>
    <property type="project" value="RGD"/>
</dbReference>
<dbReference type="GO" id="GO:0005768">
    <property type="term" value="C:endosome"/>
    <property type="evidence" value="ECO:0000314"/>
    <property type="project" value="RGD"/>
</dbReference>
<dbReference type="GO" id="GO:0000139">
    <property type="term" value="C:Golgi membrane"/>
    <property type="evidence" value="ECO:0000304"/>
    <property type="project" value="Reactome"/>
</dbReference>
<dbReference type="GO" id="GO:0005886">
    <property type="term" value="C:plasma membrane"/>
    <property type="evidence" value="ECO:0000266"/>
    <property type="project" value="RGD"/>
</dbReference>
<dbReference type="GO" id="GO:0043235">
    <property type="term" value="C:receptor complex"/>
    <property type="evidence" value="ECO:0000266"/>
    <property type="project" value="RGD"/>
</dbReference>
<dbReference type="GO" id="GO:0008179">
    <property type="term" value="F:adenylate cyclase binding"/>
    <property type="evidence" value="ECO:0000314"/>
    <property type="project" value="RGD"/>
</dbReference>
<dbReference type="GO" id="GO:0008528">
    <property type="term" value="F:G protein-coupled peptide receptor activity"/>
    <property type="evidence" value="ECO:0000318"/>
    <property type="project" value="GO_Central"/>
</dbReference>
<dbReference type="GO" id="GO:0042923">
    <property type="term" value="F:neuropeptide binding"/>
    <property type="evidence" value="ECO:0000314"/>
    <property type="project" value="RGD"/>
</dbReference>
<dbReference type="GO" id="GO:0017046">
    <property type="term" value="F:peptide hormone binding"/>
    <property type="evidence" value="ECO:0000318"/>
    <property type="project" value="GO_Central"/>
</dbReference>
<dbReference type="GO" id="GO:0001634">
    <property type="term" value="F:pituitary adenylate cyclase-activating polypeptide receptor activity"/>
    <property type="evidence" value="ECO:0000250"/>
    <property type="project" value="UniProtKB"/>
</dbReference>
<dbReference type="GO" id="GO:0031267">
    <property type="term" value="F:small GTPase binding"/>
    <property type="evidence" value="ECO:0000314"/>
    <property type="project" value="RGD"/>
</dbReference>
<dbReference type="GO" id="GO:0004999">
    <property type="term" value="F:vasoactive intestinal polypeptide receptor activity"/>
    <property type="evidence" value="ECO:0007669"/>
    <property type="project" value="InterPro"/>
</dbReference>
<dbReference type="GO" id="GO:0007189">
    <property type="term" value="P:adenylate cyclase-activating G protein-coupled receptor signaling pathway"/>
    <property type="evidence" value="ECO:0000250"/>
    <property type="project" value="UniProtKB"/>
</dbReference>
<dbReference type="GO" id="GO:0007188">
    <property type="term" value="P:adenylate cyclase-modulating G protein-coupled receptor signaling pathway"/>
    <property type="evidence" value="ECO:0000318"/>
    <property type="project" value="GO_Central"/>
</dbReference>
<dbReference type="GO" id="GO:0141156">
    <property type="term" value="P:cAMP/PKA signal transduction"/>
    <property type="evidence" value="ECO:0000314"/>
    <property type="project" value="RGD"/>
</dbReference>
<dbReference type="GO" id="GO:0030154">
    <property type="term" value="P:cell differentiation"/>
    <property type="evidence" value="ECO:0007669"/>
    <property type="project" value="UniProtKB-KW"/>
</dbReference>
<dbReference type="GO" id="GO:0007166">
    <property type="term" value="P:cell surface receptor signaling pathway"/>
    <property type="evidence" value="ECO:0007669"/>
    <property type="project" value="InterPro"/>
</dbReference>
<dbReference type="GO" id="GO:0046545">
    <property type="term" value="P:development of primary female sexual characteristics"/>
    <property type="evidence" value="ECO:0000270"/>
    <property type="project" value="RGD"/>
</dbReference>
<dbReference type="GO" id="GO:0033555">
    <property type="term" value="P:multicellular organismal response to stress"/>
    <property type="evidence" value="ECO:0000270"/>
    <property type="project" value="RGD"/>
</dbReference>
<dbReference type="GO" id="GO:1901032">
    <property type="term" value="P:negative regulation of response to reactive oxygen species"/>
    <property type="evidence" value="ECO:0000314"/>
    <property type="project" value="RGD"/>
</dbReference>
<dbReference type="GO" id="GO:0010524">
    <property type="term" value="P:positive regulation of calcium ion transport into cytosol"/>
    <property type="evidence" value="ECO:0000315"/>
    <property type="project" value="RGD"/>
</dbReference>
<dbReference type="GO" id="GO:0141163">
    <property type="term" value="P:positive regulation of cAMP/PKA signal transduction"/>
    <property type="evidence" value="ECO:0000314"/>
    <property type="project" value="RGD"/>
</dbReference>
<dbReference type="GO" id="GO:0060732">
    <property type="term" value="P:positive regulation of inositol phosphate biosynthetic process"/>
    <property type="evidence" value="ECO:0000314"/>
    <property type="project" value="RGD"/>
</dbReference>
<dbReference type="GO" id="GO:0051057">
    <property type="term" value="P:positive regulation of small GTPase mediated signal transduction"/>
    <property type="evidence" value="ECO:0000315"/>
    <property type="project" value="ParkinsonsUK-UCL"/>
</dbReference>
<dbReference type="GO" id="GO:0032355">
    <property type="term" value="P:response to estradiol"/>
    <property type="evidence" value="ECO:0000270"/>
    <property type="project" value="RGD"/>
</dbReference>
<dbReference type="GO" id="GO:0045471">
    <property type="term" value="P:response to ethanol"/>
    <property type="evidence" value="ECO:0000270"/>
    <property type="project" value="RGD"/>
</dbReference>
<dbReference type="GO" id="GO:0009410">
    <property type="term" value="P:response to xenobiotic stimulus"/>
    <property type="evidence" value="ECO:0000270"/>
    <property type="project" value="RGD"/>
</dbReference>
<dbReference type="GO" id="GO:0007283">
    <property type="term" value="P:spermatogenesis"/>
    <property type="evidence" value="ECO:0007669"/>
    <property type="project" value="UniProtKB-KW"/>
</dbReference>
<dbReference type="FunFam" id="4.10.1240.10:FF:000008">
    <property type="entry name" value="pituitary adenylate cyclase-activating polypeptide type I receptor"/>
    <property type="match status" value="1"/>
</dbReference>
<dbReference type="Gene3D" id="4.10.1240.10">
    <property type="entry name" value="GPCR, family 2, extracellular hormone receptor domain"/>
    <property type="match status" value="1"/>
</dbReference>
<dbReference type="Gene3D" id="1.20.1070.10">
    <property type="entry name" value="Rhodopsin 7-helix transmembrane proteins"/>
    <property type="match status" value="1"/>
</dbReference>
<dbReference type="InterPro" id="IPR050332">
    <property type="entry name" value="GPCR_2"/>
</dbReference>
<dbReference type="InterPro" id="IPR017981">
    <property type="entry name" value="GPCR_2-like_7TM"/>
</dbReference>
<dbReference type="InterPro" id="IPR036445">
    <property type="entry name" value="GPCR_2_extracell_dom_sf"/>
</dbReference>
<dbReference type="InterPro" id="IPR001879">
    <property type="entry name" value="GPCR_2_extracellular_dom"/>
</dbReference>
<dbReference type="InterPro" id="IPR002285">
    <property type="entry name" value="GPCR_2_PACAP_1_rcpt"/>
</dbReference>
<dbReference type="InterPro" id="IPR000832">
    <property type="entry name" value="GPCR_2_secretin-like"/>
</dbReference>
<dbReference type="InterPro" id="IPR017983">
    <property type="entry name" value="GPCR_2_secretin-like_CS"/>
</dbReference>
<dbReference type="PANTHER" id="PTHR45620">
    <property type="entry name" value="PDF RECEPTOR-LIKE PROTEIN-RELATED"/>
    <property type="match status" value="1"/>
</dbReference>
<dbReference type="PANTHER" id="PTHR45620:SF12">
    <property type="entry name" value="PITUITARY ADENYLATE CYCLASE-ACTIVATING POLYPEPTIDE TYPE I RECEPTOR"/>
    <property type="match status" value="1"/>
</dbReference>
<dbReference type="Pfam" id="PF00002">
    <property type="entry name" value="7tm_2"/>
    <property type="match status" value="1"/>
</dbReference>
<dbReference type="Pfam" id="PF02793">
    <property type="entry name" value="HRM"/>
    <property type="match status" value="1"/>
</dbReference>
<dbReference type="PRINTS" id="PR00249">
    <property type="entry name" value="GPCRSECRETIN"/>
</dbReference>
<dbReference type="PRINTS" id="PR01156">
    <property type="entry name" value="PACAPRECEPTR"/>
</dbReference>
<dbReference type="SMART" id="SM00008">
    <property type="entry name" value="HormR"/>
    <property type="match status" value="1"/>
</dbReference>
<dbReference type="SUPFAM" id="SSF81321">
    <property type="entry name" value="Family A G protein-coupled receptor-like"/>
    <property type="match status" value="1"/>
</dbReference>
<dbReference type="SUPFAM" id="SSF111418">
    <property type="entry name" value="Hormone receptor domain"/>
    <property type="match status" value="1"/>
</dbReference>
<dbReference type="PROSITE" id="PS00649">
    <property type="entry name" value="G_PROTEIN_RECEP_F2_1"/>
    <property type="match status" value="1"/>
</dbReference>
<dbReference type="PROSITE" id="PS00650">
    <property type="entry name" value="G_PROTEIN_RECEP_F2_2"/>
    <property type="match status" value="1"/>
</dbReference>
<dbReference type="PROSITE" id="PS50227">
    <property type="entry name" value="G_PROTEIN_RECEP_F2_3"/>
    <property type="match status" value="1"/>
</dbReference>
<dbReference type="PROSITE" id="PS50261">
    <property type="entry name" value="G_PROTEIN_RECEP_F2_4"/>
    <property type="match status" value="1"/>
</dbReference>
<sequence length="523" mass="59637">MARVLQLSLTALLLPVAIAMHSDCIFKKEQAMCLERIQRANDLMGLNESSPGCPGMWDNITCWKPAQVGEMVLVSCPEVFRIFNPDQVWMTETIGDSGFADSNSLEITDMGVVGRNCTEDGWSEPFPHYFDACGFDDYEPESGDQDYYYLSVKALYTVGYSTSLATLTTAMVILCRFRKLHCTRNFIHMNLFVSFMLRAISVFIKDWILYAEQDSSHCFVSTVECKAVMVFFHYCVVSNYFWLFIEGLYLFTLLVETFFPERRYFYWYTIIGWGTPTVCVTVWAVLRLYFDDAGCWDMNDSTALWWVIKGPVVGSIMVNFVLFIGIIIILVQKLQSPDMGGNESSIYLTNLRLRVPKKTREDPLPVPSDQHSPPFLSCVQKCYCKPQRAQQHSCKMSELSTITLRLARSTLLLIPLFGIHYTVFAFSPENVSKRERLVFELGLGSFQGFVVAVLYCFLNGEVQAEIKRKWRSWKVNRYFTMDFKHRHPSLASSGVNGGTQLSILSKSSSQLRMSSLPADNLAT</sequence>
<comment type="function">
    <text evidence="2">G protein-coupled receptor activated by the neuropeptide pituitary adenylate cyclase-activating polypeptide (ADCYAP1/PACAP). Binds both PACAP27 and PACAP38 bioactive peptides. Ligand binding causes a conformation change that triggers signaling via guanine nucleotide-binding proteins (G proteins) and modulates the activity of downstream effectors. Activates cAMP-dependent pathway. May regulate the release of adrenocorticotropin, luteinizing hormone, growth hormone, prolactin, epinephrine, and catecholamine. May play a role in spermatogenesis and sperm motility. Causes smooth muscle relaxation and secretion in the gastrointestinal tract.</text>
</comment>
<comment type="subunit">
    <text evidence="2">Interacts with maxadilan, a vasodilator peptide from Lutzomyia longipalpis saliva; the interaction results in ADCYAP1R1 activation.</text>
</comment>
<comment type="subcellular location">
    <subcellularLocation>
        <location>Cell membrane</location>
        <topology evidence="2">Multi-pass membrane protein</topology>
    </subcellularLocation>
</comment>
<comment type="alternative products">
    <event type="alternative splicing"/>
    <isoform>
        <id>P32215-1</id>
        <name>HIP-HOP1</name>
        <sequence type="displayed"/>
    </isoform>
    <isoform>
        <id>P32215-2</id>
        <name>HOP1</name>
        <sequence type="described" ref="VSP_002005 VSP_002006"/>
    </isoform>
    <isoform>
        <id>P32215-3</id>
        <name>HOP2</name>
        <sequence type="described" ref="VSP_002005 VSP_002007"/>
    </isoform>
    <isoform>
        <id>P32215-4</id>
        <name>HIP</name>
        <sequence type="described" ref="VSP_002008"/>
    </isoform>
    <isoform>
        <id>P32215-5</id>
        <name>PACAP-R</name>
        <sequence type="described" ref="VSP_002009"/>
    </isoform>
</comment>
<comment type="tissue specificity">
    <text>Hypothalamus, anterior pituitary, adrenal medulla, testicular germ cells.</text>
</comment>
<comment type="similarity">
    <text evidence="5">Belongs to the G-protein coupled receptor 2 family.</text>
</comment>
<name>PACR_RAT</name>
<evidence type="ECO:0000250" key="1"/>
<evidence type="ECO:0000250" key="2">
    <source>
        <dbReference type="UniProtKB" id="P41586"/>
    </source>
</evidence>
<evidence type="ECO:0000250" key="3">
    <source>
        <dbReference type="UniProtKB" id="P70205"/>
    </source>
</evidence>
<evidence type="ECO:0000255" key="4"/>
<evidence type="ECO:0000305" key="5"/>
<evidence type="ECO:0000312" key="6">
    <source>
        <dbReference type="RGD" id="2038"/>
    </source>
</evidence>
<gene>
    <name evidence="6" type="primary">Adcyap1r1</name>
</gene>
<accession>P32215</accession>
<accession>Q63414</accession>
<reference key="1">
    <citation type="journal article" date="1993" name="Proc. Natl. Acad. Sci. U.S.A.">
        <title>Molecular cloning and functional expression of the pituitary adenylate cyclase-activating polypeptide type I receptor.</title>
        <authorList>
            <person name="Wank S.A."/>
            <person name="Pisegna J.R."/>
        </authorList>
    </citation>
    <scope>NUCLEOTIDE SEQUENCE [MRNA]</scope>
    <source>
        <tissue>Pancreas</tissue>
    </source>
</reference>
<reference key="2">
    <citation type="journal article" date="1993" name="Biochem. Biophys. Res. Commun.">
        <title>Molecular cloning and functional expression of rat cDNAs encoding the receptor for pituitary adenylate cyclase activating polypeptide (PACAP).</title>
        <authorList>
            <person name="Hosoya M."/>
            <person name="Onda H."/>
            <person name="Ogi K."/>
            <person name="Masuda Y."/>
            <person name="Miyamoto Y."/>
            <person name="Ohtaki T."/>
            <person name="Okazaki H."/>
            <person name="Arimura A."/>
            <person name="Fujino M."/>
        </authorList>
    </citation>
    <scope>NUCLEOTIDE SEQUENCE [MRNA]</scope>
    <source>
        <tissue>Brain</tissue>
    </source>
</reference>
<reference key="3">
    <citation type="journal article" date="1993" name="Neuron">
        <title>Molecular cloning and tissue distribution of a receptor for pituitary adenylate cyclase-activating polypeptide.</title>
        <authorList>
            <person name="Hashimoto H."/>
            <person name="Ishihara T."/>
            <person name="Shigemoto R."/>
            <person name="Mori K."/>
            <person name="Nagata S."/>
        </authorList>
    </citation>
    <scope>NUCLEOTIDE SEQUENCE [MRNA]</scope>
    <source>
        <tissue>Pituitary</tissue>
    </source>
</reference>
<reference key="4">
    <citation type="journal article" date="1993" name="Nature">
        <title>Differential signal transduction by five splice variants of the PACAP receptor.</title>
        <authorList>
            <person name="Spengler D."/>
            <person name="Waeber C."/>
            <person name="Pantaloni C."/>
            <person name="Holsboer F."/>
            <person name="Bockaert J."/>
            <person name="Seeburg P.H."/>
            <person name="Journot L."/>
        </authorList>
    </citation>
    <scope>NUCLEOTIDE SEQUENCE [MRNA]</scope>
    <source>
        <strain>Wistar</strain>
    </source>
</reference>
<reference key="5">
    <citation type="journal article" date="1993" name="FEBS Lett.">
        <title>Molecular cloning and expression of a cDNA encoding a receptor for pituitary adenylate cyclase activating polypeptide (PACAP).</title>
        <authorList>
            <person name="Morrow J.A."/>
            <person name="Lutz E.M."/>
            <person name="West K.M."/>
            <person name="Fink G."/>
            <person name="Harmar A.J."/>
        </authorList>
    </citation>
    <scope>NUCLEOTIDE SEQUENCE [MRNA]</scope>
    <source>
        <strain>Sprague-Dawley</strain>
        <tissue>Olfactory bulb</tissue>
    </source>
</reference>
<reference key="6">
    <citation type="submission" date="1993-05" db="EMBL/GenBank/DDBJ databases">
        <authorList>
            <person name="Svoboda M."/>
            <person name="Ciccarelli E."/>
            <person name="Tastenoy M."/>
            <person name="Christophe J."/>
        </authorList>
    </citation>
    <scope>NUCLEOTIDE SEQUENCE [MRNA] OF 115-523</scope>
    <source>
        <strain>Wistar</strain>
    </source>
</reference>